<dbReference type="EC" id="2.7.7.23" evidence="1"/>
<dbReference type="EC" id="2.3.1.157" evidence="1"/>
<dbReference type="EMBL" id="CP000803">
    <property type="protein sequence ID" value="ABU60956.1"/>
    <property type="molecule type" value="Genomic_DNA"/>
</dbReference>
<dbReference type="RefSeq" id="WP_003027098.1">
    <property type="nucleotide sequence ID" value="NC_009749.1"/>
</dbReference>
<dbReference type="SMR" id="A7NAF3"/>
<dbReference type="KEGG" id="fta:FTA_0480"/>
<dbReference type="HOGENOM" id="CLU_029499_15_2_6"/>
<dbReference type="UniPathway" id="UPA00113">
    <property type="reaction ID" value="UER00532"/>
</dbReference>
<dbReference type="UniPathway" id="UPA00113">
    <property type="reaction ID" value="UER00533"/>
</dbReference>
<dbReference type="UniPathway" id="UPA00973"/>
<dbReference type="GO" id="GO:0005737">
    <property type="term" value="C:cytoplasm"/>
    <property type="evidence" value="ECO:0007669"/>
    <property type="project" value="UniProtKB-SubCell"/>
</dbReference>
<dbReference type="GO" id="GO:0016020">
    <property type="term" value="C:membrane"/>
    <property type="evidence" value="ECO:0007669"/>
    <property type="project" value="GOC"/>
</dbReference>
<dbReference type="GO" id="GO:0019134">
    <property type="term" value="F:glucosamine-1-phosphate N-acetyltransferase activity"/>
    <property type="evidence" value="ECO:0007669"/>
    <property type="project" value="UniProtKB-UniRule"/>
</dbReference>
<dbReference type="GO" id="GO:0000287">
    <property type="term" value="F:magnesium ion binding"/>
    <property type="evidence" value="ECO:0007669"/>
    <property type="project" value="UniProtKB-UniRule"/>
</dbReference>
<dbReference type="GO" id="GO:0003977">
    <property type="term" value="F:UDP-N-acetylglucosamine diphosphorylase activity"/>
    <property type="evidence" value="ECO:0007669"/>
    <property type="project" value="UniProtKB-UniRule"/>
</dbReference>
<dbReference type="GO" id="GO:0000902">
    <property type="term" value="P:cell morphogenesis"/>
    <property type="evidence" value="ECO:0007669"/>
    <property type="project" value="UniProtKB-UniRule"/>
</dbReference>
<dbReference type="GO" id="GO:0071555">
    <property type="term" value="P:cell wall organization"/>
    <property type="evidence" value="ECO:0007669"/>
    <property type="project" value="UniProtKB-KW"/>
</dbReference>
<dbReference type="GO" id="GO:0009245">
    <property type="term" value="P:lipid A biosynthetic process"/>
    <property type="evidence" value="ECO:0007669"/>
    <property type="project" value="UniProtKB-UniRule"/>
</dbReference>
<dbReference type="GO" id="GO:0009252">
    <property type="term" value="P:peptidoglycan biosynthetic process"/>
    <property type="evidence" value="ECO:0007669"/>
    <property type="project" value="UniProtKB-UniRule"/>
</dbReference>
<dbReference type="GO" id="GO:0008360">
    <property type="term" value="P:regulation of cell shape"/>
    <property type="evidence" value="ECO:0007669"/>
    <property type="project" value="UniProtKB-KW"/>
</dbReference>
<dbReference type="GO" id="GO:0006048">
    <property type="term" value="P:UDP-N-acetylglucosamine biosynthetic process"/>
    <property type="evidence" value="ECO:0007669"/>
    <property type="project" value="UniProtKB-UniPathway"/>
</dbReference>
<dbReference type="CDD" id="cd02540">
    <property type="entry name" value="GT2_GlmU_N_bac"/>
    <property type="match status" value="1"/>
</dbReference>
<dbReference type="CDD" id="cd03353">
    <property type="entry name" value="LbH_GlmU_C"/>
    <property type="match status" value="1"/>
</dbReference>
<dbReference type="Gene3D" id="2.160.10.10">
    <property type="entry name" value="Hexapeptide repeat proteins"/>
    <property type="match status" value="1"/>
</dbReference>
<dbReference type="Gene3D" id="3.90.550.10">
    <property type="entry name" value="Spore Coat Polysaccharide Biosynthesis Protein SpsA, Chain A"/>
    <property type="match status" value="1"/>
</dbReference>
<dbReference type="HAMAP" id="MF_01631">
    <property type="entry name" value="GlmU"/>
    <property type="match status" value="1"/>
</dbReference>
<dbReference type="InterPro" id="IPR005882">
    <property type="entry name" value="Bifunctional_GlmU"/>
</dbReference>
<dbReference type="InterPro" id="IPR050065">
    <property type="entry name" value="GlmU-like"/>
</dbReference>
<dbReference type="InterPro" id="IPR038009">
    <property type="entry name" value="GlmU_C_LbH"/>
</dbReference>
<dbReference type="InterPro" id="IPR001451">
    <property type="entry name" value="Hexapep"/>
</dbReference>
<dbReference type="InterPro" id="IPR018357">
    <property type="entry name" value="Hexapep_transf_CS"/>
</dbReference>
<dbReference type="InterPro" id="IPR025877">
    <property type="entry name" value="MobA-like_NTP_Trfase"/>
</dbReference>
<dbReference type="InterPro" id="IPR029044">
    <property type="entry name" value="Nucleotide-diphossugar_trans"/>
</dbReference>
<dbReference type="InterPro" id="IPR011004">
    <property type="entry name" value="Trimer_LpxA-like_sf"/>
</dbReference>
<dbReference type="NCBIfam" id="TIGR01173">
    <property type="entry name" value="glmU"/>
    <property type="match status" value="1"/>
</dbReference>
<dbReference type="PANTHER" id="PTHR43584:SF3">
    <property type="entry name" value="BIFUNCTIONAL PROTEIN GLMU"/>
    <property type="match status" value="1"/>
</dbReference>
<dbReference type="PANTHER" id="PTHR43584">
    <property type="entry name" value="NUCLEOTIDYL TRANSFERASE"/>
    <property type="match status" value="1"/>
</dbReference>
<dbReference type="Pfam" id="PF00132">
    <property type="entry name" value="Hexapep"/>
    <property type="match status" value="2"/>
</dbReference>
<dbReference type="Pfam" id="PF12804">
    <property type="entry name" value="NTP_transf_3"/>
    <property type="match status" value="1"/>
</dbReference>
<dbReference type="SUPFAM" id="SSF53448">
    <property type="entry name" value="Nucleotide-diphospho-sugar transferases"/>
    <property type="match status" value="1"/>
</dbReference>
<dbReference type="SUPFAM" id="SSF51161">
    <property type="entry name" value="Trimeric LpxA-like enzymes"/>
    <property type="match status" value="1"/>
</dbReference>
<dbReference type="PROSITE" id="PS00101">
    <property type="entry name" value="HEXAPEP_TRANSFERASES"/>
    <property type="match status" value="1"/>
</dbReference>
<feature type="chain" id="PRO_1000056156" description="Bifunctional protein GlmU">
    <location>
        <begin position="1"/>
        <end position="455"/>
    </location>
</feature>
<feature type="region of interest" description="Pyrophosphorylase" evidence="1">
    <location>
        <begin position="1"/>
        <end position="226"/>
    </location>
</feature>
<feature type="region of interest" description="Linker" evidence="1">
    <location>
        <begin position="227"/>
        <end position="247"/>
    </location>
</feature>
<feature type="region of interest" description="N-acetyltransferase" evidence="1">
    <location>
        <begin position="248"/>
        <end position="455"/>
    </location>
</feature>
<feature type="active site" description="Proton acceptor" evidence="1">
    <location>
        <position position="360"/>
    </location>
</feature>
<feature type="binding site" evidence="1">
    <location>
        <begin position="8"/>
        <end position="11"/>
    </location>
    <ligand>
        <name>UDP-N-acetyl-alpha-D-glucosamine</name>
        <dbReference type="ChEBI" id="CHEBI:57705"/>
    </ligand>
</feature>
<feature type="binding site" evidence="1">
    <location>
        <position position="22"/>
    </location>
    <ligand>
        <name>UDP-N-acetyl-alpha-D-glucosamine</name>
        <dbReference type="ChEBI" id="CHEBI:57705"/>
    </ligand>
</feature>
<feature type="binding site" evidence="1">
    <location>
        <position position="73"/>
    </location>
    <ligand>
        <name>UDP-N-acetyl-alpha-D-glucosamine</name>
        <dbReference type="ChEBI" id="CHEBI:57705"/>
    </ligand>
</feature>
<feature type="binding site" evidence="1">
    <location>
        <begin position="78"/>
        <end position="79"/>
    </location>
    <ligand>
        <name>UDP-N-acetyl-alpha-D-glucosamine</name>
        <dbReference type="ChEBI" id="CHEBI:57705"/>
    </ligand>
</feature>
<feature type="binding site" evidence="1">
    <location>
        <begin position="99"/>
        <end position="101"/>
    </location>
    <ligand>
        <name>UDP-N-acetyl-alpha-D-glucosamine</name>
        <dbReference type="ChEBI" id="CHEBI:57705"/>
    </ligand>
</feature>
<feature type="binding site" evidence="1">
    <location>
        <position position="101"/>
    </location>
    <ligand>
        <name>Mg(2+)</name>
        <dbReference type="ChEBI" id="CHEBI:18420"/>
    </ligand>
</feature>
<feature type="binding site" evidence="1">
    <location>
        <position position="136"/>
    </location>
    <ligand>
        <name>UDP-N-acetyl-alpha-D-glucosamine</name>
        <dbReference type="ChEBI" id="CHEBI:57705"/>
    </ligand>
</feature>
<feature type="binding site" evidence="1">
    <location>
        <position position="151"/>
    </location>
    <ligand>
        <name>UDP-N-acetyl-alpha-D-glucosamine</name>
        <dbReference type="ChEBI" id="CHEBI:57705"/>
    </ligand>
</feature>
<feature type="binding site" evidence="1">
    <location>
        <position position="166"/>
    </location>
    <ligand>
        <name>UDP-N-acetyl-alpha-D-glucosamine</name>
        <dbReference type="ChEBI" id="CHEBI:57705"/>
    </ligand>
</feature>
<feature type="binding site" evidence="1">
    <location>
        <position position="224"/>
    </location>
    <ligand>
        <name>Mg(2+)</name>
        <dbReference type="ChEBI" id="CHEBI:18420"/>
    </ligand>
</feature>
<feature type="binding site" evidence="1">
    <location>
        <position position="224"/>
    </location>
    <ligand>
        <name>UDP-N-acetyl-alpha-D-glucosamine</name>
        <dbReference type="ChEBI" id="CHEBI:57705"/>
    </ligand>
</feature>
<feature type="binding site" evidence="1">
    <location>
        <position position="330"/>
    </location>
    <ligand>
        <name>UDP-N-acetyl-alpha-D-glucosamine</name>
        <dbReference type="ChEBI" id="CHEBI:57705"/>
    </ligand>
</feature>
<feature type="binding site" evidence="1">
    <location>
        <position position="348"/>
    </location>
    <ligand>
        <name>UDP-N-acetyl-alpha-D-glucosamine</name>
        <dbReference type="ChEBI" id="CHEBI:57705"/>
    </ligand>
</feature>
<feature type="binding site" evidence="1">
    <location>
        <position position="363"/>
    </location>
    <ligand>
        <name>UDP-N-acetyl-alpha-D-glucosamine</name>
        <dbReference type="ChEBI" id="CHEBI:57705"/>
    </ligand>
</feature>
<feature type="binding site" evidence="1">
    <location>
        <position position="374"/>
    </location>
    <ligand>
        <name>UDP-N-acetyl-alpha-D-glucosamine</name>
        <dbReference type="ChEBI" id="CHEBI:57705"/>
    </ligand>
</feature>
<feature type="binding site" evidence="1">
    <location>
        <position position="377"/>
    </location>
    <ligand>
        <name>acetyl-CoA</name>
        <dbReference type="ChEBI" id="CHEBI:57288"/>
    </ligand>
</feature>
<feature type="binding site" evidence="1">
    <location>
        <begin position="383"/>
        <end position="384"/>
    </location>
    <ligand>
        <name>acetyl-CoA</name>
        <dbReference type="ChEBI" id="CHEBI:57288"/>
    </ligand>
</feature>
<feature type="binding site" evidence="1">
    <location>
        <position position="402"/>
    </location>
    <ligand>
        <name>acetyl-CoA</name>
        <dbReference type="ChEBI" id="CHEBI:57288"/>
    </ligand>
</feature>
<feature type="binding site" evidence="1">
    <location>
        <position position="420"/>
    </location>
    <ligand>
        <name>acetyl-CoA</name>
        <dbReference type="ChEBI" id="CHEBI:57288"/>
    </ligand>
</feature>
<feature type="binding site" evidence="1">
    <location>
        <position position="437"/>
    </location>
    <ligand>
        <name>acetyl-CoA</name>
        <dbReference type="ChEBI" id="CHEBI:57288"/>
    </ligand>
</feature>
<accession>A7NAF3</accession>
<gene>
    <name evidence="1" type="primary">glmU</name>
    <name type="ordered locus">FTA_0480</name>
</gene>
<keyword id="KW-0012">Acyltransferase</keyword>
<keyword id="KW-0133">Cell shape</keyword>
<keyword id="KW-0961">Cell wall biogenesis/degradation</keyword>
<keyword id="KW-0963">Cytoplasm</keyword>
<keyword id="KW-0460">Magnesium</keyword>
<keyword id="KW-0479">Metal-binding</keyword>
<keyword id="KW-0511">Multifunctional enzyme</keyword>
<keyword id="KW-0548">Nucleotidyltransferase</keyword>
<keyword id="KW-0573">Peptidoglycan synthesis</keyword>
<keyword id="KW-0677">Repeat</keyword>
<keyword id="KW-0808">Transferase</keyword>
<evidence type="ECO:0000255" key="1">
    <source>
        <dbReference type="HAMAP-Rule" id="MF_01631"/>
    </source>
</evidence>
<sequence length="455" mass="49656">MGLSVVILAAGKGSRMNSNKPKVLQTLAAKTLIEHVVSSVEKLNPDNIVVVTGHLKEQVEDALQGRNITFVYQQQQLGTGHAVLQALPYLKEQKVLILYGDVPLISTEVLENLVDTTNDDDLGVLTAFVENPQGLGRIVRDKFGAVTEIVEEKDANDIQRQIKEINTGIYCVHKNLLQKWLPEIKANNVQKEYYLTDIITFAKADHVSINVTHPINEFEILGVNDRTQLASLERVWQRNVAEKIMAKGVSIADPNRFDVRGNLDVGKDCWIDINVIIKGNVKLGNNVVIGANCILKNCIIEDNVRIKSNSMVDGSIIREGAIVGPFARVRPECDVKEGAVIGNFVEAKKTILGKGSKASHLTYLGDSEIGANCNIGAGVITCNYDGVNKHKTVIGDYAFIGSDSQLIAPVNIGQGATVGAGSTIVKDVPADNLAISRARQRHIDTWQRSVKKTDK</sequence>
<reference key="1">
    <citation type="journal article" date="2009" name="PLoS ONE">
        <title>Complete genome sequence of Francisella tularensis subspecies holarctica FTNF002-00.</title>
        <authorList>
            <person name="Barabote R.D."/>
            <person name="Xie G."/>
            <person name="Brettin T.S."/>
            <person name="Hinrichs S.H."/>
            <person name="Fey P.D."/>
            <person name="Jay J.J."/>
            <person name="Engle J.L."/>
            <person name="Godbole S.D."/>
            <person name="Noronha J.M."/>
            <person name="Scheuermann R.H."/>
            <person name="Zhou L.W."/>
            <person name="Lion C."/>
            <person name="Dempsey M.P."/>
        </authorList>
    </citation>
    <scope>NUCLEOTIDE SEQUENCE [LARGE SCALE GENOMIC DNA]</scope>
    <source>
        <strain>FTNF002-00 / FTA</strain>
    </source>
</reference>
<proteinExistence type="inferred from homology"/>
<name>GLMU_FRATF</name>
<protein>
    <recommendedName>
        <fullName evidence="1">Bifunctional protein GlmU</fullName>
    </recommendedName>
    <domain>
        <recommendedName>
            <fullName evidence="1">UDP-N-acetylglucosamine pyrophosphorylase</fullName>
            <ecNumber evidence="1">2.7.7.23</ecNumber>
        </recommendedName>
        <alternativeName>
            <fullName evidence="1">N-acetylglucosamine-1-phosphate uridyltransferase</fullName>
        </alternativeName>
    </domain>
    <domain>
        <recommendedName>
            <fullName evidence="1">Glucosamine-1-phosphate N-acetyltransferase</fullName>
            <ecNumber evidence="1">2.3.1.157</ecNumber>
        </recommendedName>
    </domain>
</protein>
<comment type="function">
    <text evidence="1">Catalyzes the last two sequential reactions in the de novo biosynthetic pathway for UDP-N-acetylglucosamine (UDP-GlcNAc). The C-terminal domain catalyzes the transfer of acetyl group from acetyl coenzyme A to glucosamine-1-phosphate (GlcN-1-P) to produce N-acetylglucosamine-1-phosphate (GlcNAc-1-P), which is converted into UDP-GlcNAc by the transfer of uridine 5-monophosphate (from uridine 5-triphosphate), a reaction catalyzed by the N-terminal domain.</text>
</comment>
<comment type="catalytic activity">
    <reaction evidence="1">
        <text>alpha-D-glucosamine 1-phosphate + acetyl-CoA = N-acetyl-alpha-D-glucosamine 1-phosphate + CoA + H(+)</text>
        <dbReference type="Rhea" id="RHEA:13725"/>
        <dbReference type="ChEBI" id="CHEBI:15378"/>
        <dbReference type="ChEBI" id="CHEBI:57287"/>
        <dbReference type="ChEBI" id="CHEBI:57288"/>
        <dbReference type="ChEBI" id="CHEBI:57776"/>
        <dbReference type="ChEBI" id="CHEBI:58516"/>
        <dbReference type="EC" id="2.3.1.157"/>
    </reaction>
</comment>
<comment type="catalytic activity">
    <reaction evidence="1">
        <text>N-acetyl-alpha-D-glucosamine 1-phosphate + UTP + H(+) = UDP-N-acetyl-alpha-D-glucosamine + diphosphate</text>
        <dbReference type="Rhea" id="RHEA:13509"/>
        <dbReference type="ChEBI" id="CHEBI:15378"/>
        <dbReference type="ChEBI" id="CHEBI:33019"/>
        <dbReference type="ChEBI" id="CHEBI:46398"/>
        <dbReference type="ChEBI" id="CHEBI:57705"/>
        <dbReference type="ChEBI" id="CHEBI:57776"/>
        <dbReference type="EC" id="2.7.7.23"/>
    </reaction>
</comment>
<comment type="cofactor">
    <cofactor evidence="1">
        <name>Mg(2+)</name>
        <dbReference type="ChEBI" id="CHEBI:18420"/>
    </cofactor>
    <text evidence="1">Binds 1 Mg(2+) ion per subunit.</text>
</comment>
<comment type="pathway">
    <text evidence="1">Nucleotide-sugar biosynthesis; UDP-N-acetyl-alpha-D-glucosamine biosynthesis; N-acetyl-alpha-D-glucosamine 1-phosphate from alpha-D-glucosamine 6-phosphate (route II): step 2/2.</text>
</comment>
<comment type="pathway">
    <text evidence="1">Nucleotide-sugar biosynthesis; UDP-N-acetyl-alpha-D-glucosamine biosynthesis; UDP-N-acetyl-alpha-D-glucosamine from N-acetyl-alpha-D-glucosamine 1-phosphate: step 1/1.</text>
</comment>
<comment type="pathway">
    <text evidence="1">Bacterial outer membrane biogenesis; LPS lipid A biosynthesis.</text>
</comment>
<comment type="subunit">
    <text evidence="1">Homotrimer.</text>
</comment>
<comment type="subcellular location">
    <subcellularLocation>
        <location evidence="1">Cytoplasm</location>
    </subcellularLocation>
</comment>
<comment type="similarity">
    <text evidence="1">In the N-terminal section; belongs to the N-acetylglucosamine-1-phosphate uridyltransferase family.</text>
</comment>
<comment type="similarity">
    <text evidence="1">In the C-terminal section; belongs to the transferase hexapeptide repeat family.</text>
</comment>
<organism>
    <name type="scientific">Francisella tularensis subsp. holarctica (strain FTNF002-00 / FTA)</name>
    <dbReference type="NCBI Taxonomy" id="458234"/>
    <lineage>
        <taxon>Bacteria</taxon>
        <taxon>Pseudomonadati</taxon>
        <taxon>Pseudomonadota</taxon>
        <taxon>Gammaproteobacteria</taxon>
        <taxon>Thiotrichales</taxon>
        <taxon>Francisellaceae</taxon>
        <taxon>Francisella</taxon>
    </lineage>
</organism>